<protein>
    <recommendedName>
        <fullName>Acetyl-CoA carboxylase</fullName>
        <shortName>ACC</shortName>
        <ecNumber>6.4.1.2</ecNumber>
    </recommendedName>
</protein>
<organism>
    <name type="scientific">Catharanthus roseus</name>
    <name type="common">Madagascar periwinkle</name>
    <name type="synonym">Vinca rosea</name>
    <dbReference type="NCBI Taxonomy" id="4058"/>
    <lineage>
        <taxon>Eukaryota</taxon>
        <taxon>Viridiplantae</taxon>
        <taxon>Streptophyta</taxon>
        <taxon>Embryophyta</taxon>
        <taxon>Tracheophyta</taxon>
        <taxon>Spermatophyta</taxon>
        <taxon>Magnoliopsida</taxon>
        <taxon>eudicotyledons</taxon>
        <taxon>Gunneridae</taxon>
        <taxon>Pentapetalae</taxon>
        <taxon>asterids</taxon>
        <taxon>lamiids</taxon>
        <taxon>Gentianales</taxon>
        <taxon>Apocynaceae</taxon>
        <taxon>Rauvolfioideae</taxon>
        <taxon>Vinceae</taxon>
        <taxon>Catharanthinae</taxon>
        <taxon>Catharanthus</taxon>
    </lineage>
</organism>
<keyword id="KW-0067">ATP-binding</keyword>
<keyword id="KW-0903">Direct protein sequencing</keyword>
<keyword id="KW-0275">Fatty acid biosynthesis</keyword>
<keyword id="KW-0276">Fatty acid metabolism</keyword>
<keyword id="KW-0436">Ligase</keyword>
<keyword id="KW-0444">Lipid biosynthesis</keyword>
<keyword id="KW-0443">Lipid metabolism</keyword>
<keyword id="KW-0547">Nucleotide-binding</keyword>
<proteinExistence type="evidence at protein level"/>
<name>ACAC_CATRO</name>
<reference evidence="4" key="1">
    <citation type="submission" date="2008-01" db="UniProtKB">
        <authorList>
            <person name="Varman P.A.M."/>
            <person name="Ranjitha Kumari B.D."/>
        </authorList>
    </citation>
    <scope>PROTEIN SEQUENCE</scope>
    <scope>MASS SPECTROMETRY</scope>
</reference>
<dbReference type="EC" id="6.4.1.2"/>
<dbReference type="UniPathway" id="UPA00655">
    <property type="reaction ID" value="UER00711"/>
</dbReference>
<dbReference type="GO" id="GO:0003989">
    <property type="term" value="F:acetyl-CoA carboxylase activity"/>
    <property type="evidence" value="ECO:0007669"/>
    <property type="project" value="UniProtKB-EC"/>
</dbReference>
<dbReference type="GO" id="GO:0005524">
    <property type="term" value="F:ATP binding"/>
    <property type="evidence" value="ECO:0007669"/>
    <property type="project" value="UniProtKB-KW"/>
</dbReference>
<dbReference type="GO" id="GO:0006633">
    <property type="term" value="P:fatty acid biosynthetic process"/>
    <property type="evidence" value="ECO:0007669"/>
    <property type="project" value="UniProtKB-KW"/>
</dbReference>
<dbReference type="GO" id="GO:2001295">
    <property type="term" value="P:malonyl-CoA biosynthetic process"/>
    <property type="evidence" value="ECO:0007669"/>
    <property type="project" value="UniProtKB-UniPathway"/>
</dbReference>
<evidence type="ECO:0000250" key="1">
    <source>
        <dbReference type="UniProtKB" id="Q00955"/>
    </source>
</evidence>
<evidence type="ECO:0000256" key="2">
    <source>
        <dbReference type="SAM" id="MobiDB-lite"/>
    </source>
</evidence>
<evidence type="ECO:0000269" key="3">
    <source ref="1"/>
</evidence>
<evidence type="ECO:0000305" key="4"/>
<feature type="chain" id="PRO_0000322590" description="Acetyl-CoA carboxylase">
    <location>
        <begin position="1" status="less than"/>
        <end position="31" status="greater than"/>
    </location>
</feature>
<feature type="region of interest" description="Disordered" evidence="2">
    <location>
        <begin position="1"/>
        <end position="31"/>
    </location>
</feature>
<feature type="compositionally biased region" description="Basic and acidic residues" evidence="2">
    <location>
        <begin position="11"/>
        <end position="21"/>
    </location>
</feature>
<feature type="non-consecutive residues" evidence="4">
    <location>
        <begin position="17"/>
        <end position="18"/>
    </location>
</feature>
<feature type="non-terminal residue">
    <location>
        <position position="1"/>
    </location>
</feature>
<feature type="non-terminal residue">
    <location>
        <position position="31"/>
    </location>
</feature>
<comment type="catalytic activity">
    <reaction evidence="1">
        <text>hydrogencarbonate + acetyl-CoA + ATP = malonyl-CoA + ADP + phosphate + H(+)</text>
        <dbReference type="Rhea" id="RHEA:11308"/>
        <dbReference type="ChEBI" id="CHEBI:15378"/>
        <dbReference type="ChEBI" id="CHEBI:17544"/>
        <dbReference type="ChEBI" id="CHEBI:30616"/>
        <dbReference type="ChEBI" id="CHEBI:43474"/>
        <dbReference type="ChEBI" id="CHEBI:57288"/>
        <dbReference type="ChEBI" id="CHEBI:57384"/>
        <dbReference type="ChEBI" id="CHEBI:456216"/>
        <dbReference type="EC" id="6.4.1.2"/>
    </reaction>
</comment>
<comment type="pathway">
    <text evidence="1">Lipid metabolism; malonyl-CoA biosynthesis; malonyl-CoA from acetyl-CoA: step 1/1.</text>
</comment>
<comment type="mass spectrometry"/>
<comment type="miscellaneous">
    <text>On the 2D-gel the determined pI of this protein is: 4.86, its MW is: 16.9 kDa.</text>
</comment>
<comment type="caution">
    <text evidence="4">The order of the peptides shown is unknown.</text>
</comment>
<accession>P85438</accession>
<sequence>RISSSVIAHKTQLDSGKREVYSSHMQLGGPK</sequence>